<keyword id="KW-0044">Antibiotic</keyword>
<keyword id="KW-0929">Antimicrobial</keyword>
<keyword id="KW-0053">Apoptosis</keyword>
<keyword id="KW-0204">Cytolysis</keyword>
<keyword id="KW-1015">Disulfide bond</keyword>
<keyword id="KW-0274">FAD</keyword>
<keyword id="KW-0285">Flavoprotein</keyword>
<keyword id="KW-0325">Glycoprotein</keyword>
<keyword id="KW-0354">Hemolysis</keyword>
<keyword id="KW-1199">Hemostasis impairing toxin</keyword>
<keyword id="KW-0560">Oxidoreductase</keyword>
<keyword id="KW-0964">Secreted</keyword>
<keyword id="KW-0732">Signal</keyword>
<keyword id="KW-0800">Toxin</keyword>
<reference key="1">
    <citation type="journal article" date="2005" name="Cell. Mol. Life Sci.">
        <title>Identification and analysis of venom gland-specific genes from the coastal taipan (Oxyuranus scutellatus) and related species.</title>
        <authorList>
            <person name="St Pierre L."/>
            <person name="Woods R."/>
            <person name="Earl S.T.H."/>
            <person name="Masci P.P."/>
            <person name="Lavin M.F."/>
        </authorList>
    </citation>
    <scope>NUCLEOTIDE SEQUENCE [MRNA]</scope>
    <source>
        <tissue>Venom gland</tissue>
    </source>
</reference>
<reference key="2">
    <citation type="journal article" date="1991" name="Toxicon">
        <title>Antibacterial effects of different snake venoms: purification and characterization of antibacterial proteins from Pseudechis australis (Australian king brown or mulga snake) venom.</title>
        <authorList>
            <person name="Stiles B.G."/>
            <person name="Sexton F.W."/>
            <person name="Weinstein S.A."/>
        </authorList>
    </citation>
    <scope>FUNCTION</scope>
    <scope>SUBUNIT</scope>
    <scope>SUBCELLULAR LOCATION</scope>
    <source>
        <tissue>Venom</tissue>
    </source>
</reference>
<evidence type="ECO:0000250" key="1">
    <source>
        <dbReference type="UniProtKB" id="P0CC17"/>
    </source>
</evidence>
<evidence type="ECO:0000250" key="2">
    <source>
        <dbReference type="UniProtKB" id="P81382"/>
    </source>
</evidence>
<evidence type="ECO:0000255" key="3"/>
<evidence type="ECO:0000269" key="4">
    <source>
    </source>
</evidence>
<evidence type="ECO:0000303" key="5">
    <source>
    </source>
</evidence>
<evidence type="ECO:0000305" key="6"/>
<evidence type="ECO:0000305" key="7">
    <source>
    </source>
</evidence>
<proteinExistence type="evidence at protein level"/>
<dbReference type="EC" id="1.4.3.2"/>
<dbReference type="EMBL" id="DQ088992">
    <property type="protein sequence ID" value="AAY89682.1"/>
    <property type="molecule type" value="mRNA"/>
</dbReference>
<dbReference type="SMR" id="Q4JHE1"/>
<dbReference type="GO" id="GO:0005576">
    <property type="term" value="C:extracellular region"/>
    <property type="evidence" value="ECO:0007669"/>
    <property type="project" value="UniProtKB-SubCell"/>
</dbReference>
<dbReference type="GO" id="GO:0001716">
    <property type="term" value="F:L-amino-acid oxidase activity"/>
    <property type="evidence" value="ECO:0007669"/>
    <property type="project" value="UniProtKB-EC"/>
</dbReference>
<dbReference type="GO" id="GO:0090729">
    <property type="term" value="F:toxin activity"/>
    <property type="evidence" value="ECO:0007669"/>
    <property type="project" value="UniProtKB-KW"/>
</dbReference>
<dbReference type="GO" id="GO:0009063">
    <property type="term" value="P:amino acid catabolic process"/>
    <property type="evidence" value="ECO:0007669"/>
    <property type="project" value="TreeGrafter"/>
</dbReference>
<dbReference type="GO" id="GO:0006915">
    <property type="term" value="P:apoptotic process"/>
    <property type="evidence" value="ECO:0007669"/>
    <property type="project" value="UniProtKB-KW"/>
</dbReference>
<dbReference type="GO" id="GO:0042742">
    <property type="term" value="P:defense response to bacterium"/>
    <property type="evidence" value="ECO:0007669"/>
    <property type="project" value="UniProtKB-KW"/>
</dbReference>
<dbReference type="GO" id="GO:0031640">
    <property type="term" value="P:killing of cells of another organism"/>
    <property type="evidence" value="ECO:0007669"/>
    <property type="project" value="UniProtKB-KW"/>
</dbReference>
<dbReference type="FunFam" id="1.10.405.10:FF:000004">
    <property type="entry name" value="Amine oxidase"/>
    <property type="match status" value="1"/>
</dbReference>
<dbReference type="FunFam" id="3.50.50.60:FF:000450">
    <property type="entry name" value="Amine oxidase"/>
    <property type="match status" value="1"/>
</dbReference>
<dbReference type="Gene3D" id="3.90.660.10">
    <property type="match status" value="1"/>
</dbReference>
<dbReference type="Gene3D" id="3.50.50.60">
    <property type="entry name" value="FAD/NAD(P)-binding domain"/>
    <property type="match status" value="1"/>
</dbReference>
<dbReference type="Gene3D" id="1.10.405.10">
    <property type="entry name" value="Guanine Nucleotide Dissociation Inhibitor, domain 1"/>
    <property type="match status" value="1"/>
</dbReference>
<dbReference type="InterPro" id="IPR002937">
    <property type="entry name" value="Amino_oxidase"/>
</dbReference>
<dbReference type="InterPro" id="IPR036188">
    <property type="entry name" value="FAD/NAD-bd_sf"/>
</dbReference>
<dbReference type="InterPro" id="IPR001613">
    <property type="entry name" value="Flavin_amine_oxidase"/>
</dbReference>
<dbReference type="InterPro" id="IPR050281">
    <property type="entry name" value="Flavin_monoamine_oxidase"/>
</dbReference>
<dbReference type="PANTHER" id="PTHR10742:SF355">
    <property type="entry name" value="AMINE OXIDASE"/>
    <property type="match status" value="1"/>
</dbReference>
<dbReference type="PANTHER" id="PTHR10742">
    <property type="entry name" value="FLAVIN MONOAMINE OXIDASE"/>
    <property type="match status" value="1"/>
</dbReference>
<dbReference type="Pfam" id="PF01593">
    <property type="entry name" value="Amino_oxidase"/>
    <property type="match status" value="1"/>
</dbReference>
<dbReference type="PRINTS" id="PR00757">
    <property type="entry name" value="AMINEOXDASEF"/>
</dbReference>
<dbReference type="SUPFAM" id="SSF54373">
    <property type="entry name" value="FAD-linked reductases, C-terminal domain"/>
    <property type="match status" value="1"/>
</dbReference>
<dbReference type="SUPFAM" id="SSF51905">
    <property type="entry name" value="FAD/NAD(P)-binding domain"/>
    <property type="match status" value="1"/>
</dbReference>
<organism>
    <name type="scientific">Pseudechis australis</name>
    <name type="common">Mulga snake</name>
    <name type="synonym">King brown snake</name>
    <dbReference type="NCBI Taxonomy" id="8670"/>
    <lineage>
        <taxon>Eukaryota</taxon>
        <taxon>Metazoa</taxon>
        <taxon>Chordata</taxon>
        <taxon>Craniata</taxon>
        <taxon>Vertebrata</taxon>
        <taxon>Euteleostomi</taxon>
        <taxon>Lepidosauria</taxon>
        <taxon>Squamata</taxon>
        <taxon>Bifurcata</taxon>
        <taxon>Unidentata</taxon>
        <taxon>Episquamata</taxon>
        <taxon>Toxicofera</taxon>
        <taxon>Serpentes</taxon>
        <taxon>Colubroidea</taxon>
        <taxon>Elapidae</taxon>
        <taxon>Hydrophiinae</taxon>
        <taxon>Pseudechis</taxon>
    </lineage>
</organism>
<protein>
    <recommendedName>
        <fullName>L-amino-acid oxidase</fullName>
        <shortName evidence="5">LAAO</shortName>
        <shortName>LAO</shortName>
        <ecNumber>1.4.3.2</ecNumber>
    </recommendedName>
</protein>
<comment type="function">
    <text evidence="1 4">Catalyzes an oxidative deamination of predominantly hydrophobic and aromatic L-amino acids, thus producing hydrogen peroxide that may contribute to the diverse toxic effects of this enzyme. Exhibits diverse biological activities, such as hemorrhage, hemolysis, edema, apoptosis of vascular endothelial cells or tumor cell lines, antiparasitic activities, as well as regulation of platelet aggregation. Effects of snake L-amino oxidases on platelets are controversial, since they either induce aggregation or inhibit agonist-induced aggregation. These different effects are probably due to different experimental conditions (By similarity). This protein has antibacterial activities (PubMed:1796476).</text>
</comment>
<comment type="catalytic activity">
    <reaction>
        <text>an L-alpha-amino acid + O2 + H2O = a 2-oxocarboxylate + H2O2 + NH4(+)</text>
        <dbReference type="Rhea" id="RHEA:13781"/>
        <dbReference type="ChEBI" id="CHEBI:15377"/>
        <dbReference type="ChEBI" id="CHEBI:15379"/>
        <dbReference type="ChEBI" id="CHEBI:16240"/>
        <dbReference type="ChEBI" id="CHEBI:28938"/>
        <dbReference type="ChEBI" id="CHEBI:35179"/>
        <dbReference type="ChEBI" id="CHEBI:59869"/>
        <dbReference type="EC" id="1.4.3.2"/>
    </reaction>
</comment>
<comment type="cofactor">
    <cofactor evidence="2">
        <name>FAD</name>
        <dbReference type="ChEBI" id="CHEBI:57692"/>
    </cofactor>
</comment>
<comment type="subunit">
    <text evidence="4">Homodimer; non-covalently linked.</text>
</comment>
<comment type="subcellular location">
    <subcellularLocation>
        <location evidence="4">Secreted</location>
    </subcellularLocation>
</comment>
<comment type="tissue specificity">
    <text evidence="7">Expressed by the venom gland.</text>
</comment>
<comment type="PTM">
    <text evidence="2">N-glycosylated.</text>
</comment>
<comment type="similarity">
    <text evidence="6">Belongs to the flavin monoamine oxidase family. FIG1 subfamily.</text>
</comment>
<accession>Q4JHE1</accession>
<sequence>MNVFFMFSLLFLAALGSCADDRRRPLEECFREADYEEFLEIAKNGLQRTSNPKRVVVVGAGMAGLSAAYVLAGAGHQVTLLEASERVGGRVNTYRNEKDGWYVNLGPMRLPERHRIIREYIRKFGLELNEFIQENDNAWYFIKNIRKRVSEVKKDPGVFKYPVKPSEEGKSASQLYRESLQKVIEELKRTNCSYILNKYDTYSTKEYLIKEGNLSPGAVDMIGDLLNEDSSYYLSFIESLKSDDIFSYEKRFDEIVGGFDQLPRSMYQAIAEKVHLNAQVIKIQQNAEDVRVTYQTPAKTLSYVIADYVIVCSTSRAARRIHFEPPLPPKKAHALRSIHYRSSTKIFLTCSQKFWEADGIHGGKSTTDLPSRFIYYPNHSFTSGIGVIVAYTLADDTDFFQALDIETSADIVINDLSLIHQLPKEQIQALCYPSKIQKWSLDEYAMGAITSFTPYQFQDFFEIVAAPVGRIYFAGEYTASVHGWLDSTIKSGLTAARDVNLASQKPSRIQLSNDNEL</sequence>
<name>OXLA_PSEAU</name>
<feature type="signal peptide" evidence="3">
    <location>
        <begin position="1"/>
        <end position="18"/>
    </location>
</feature>
<feature type="chain" id="PRO_5000140380" description="L-amino-acid oxidase">
    <location>
        <begin position="19"/>
        <end position="517"/>
    </location>
</feature>
<feature type="binding site" evidence="2">
    <location>
        <begin position="62"/>
        <end position="63"/>
    </location>
    <ligand>
        <name>FAD</name>
        <dbReference type="ChEBI" id="CHEBI:57692"/>
    </ligand>
</feature>
<feature type="binding site" evidence="2">
    <location>
        <begin position="82"/>
        <end position="83"/>
    </location>
    <ligand>
        <name>FAD</name>
        <dbReference type="ChEBI" id="CHEBI:57692"/>
    </ligand>
</feature>
<feature type="binding site" evidence="2">
    <location>
        <position position="90"/>
    </location>
    <ligand>
        <name>FAD</name>
        <dbReference type="ChEBI" id="CHEBI:57692"/>
    </ligand>
</feature>
<feature type="binding site" evidence="2">
    <location>
        <begin position="106"/>
        <end position="109"/>
    </location>
    <ligand>
        <name>FAD</name>
        <dbReference type="ChEBI" id="CHEBI:57692"/>
    </ligand>
</feature>
<feature type="binding site" evidence="2">
    <location>
        <position position="109"/>
    </location>
    <ligand>
        <name>substrate</name>
    </ligand>
</feature>
<feature type="binding site" evidence="2">
    <location>
        <position position="280"/>
    </location>
    <ligand>
        <name>FAD</name>
        <dbReference type="ChEBI" id="CHEBI:57692"/>
    </ligand>
</feature>
<feature type="binding site" evidence="2">
    <location>
        <position position="391"/>
    </location>
    <ligand>
        <name>substrate</name>
    </ligand>
</feature>
<feature type="binding site" evidence="2">
    <location>
        <position position="476"/>
    </location>
    <ligand>
        <name>FAD</name>
        <dbReference type="ChEBI" id="CHEBI:57692"/>
    </ligand>
</feature>
<feature type="binding site" evidence="2">
    <location>
        <begin position="483"/>
        <end position="488"/>
    </location>
    <ligand>
        <name>FAD</name>
        <dbReference type="ChEBI" id="CHEBI:57692"/>
    </ligand>
</feature>
<feature type="binding site" evidence="2">
    <location>
        <begin position="483"/>
        <end position="484"/>
    </location>
    <ligand>
        <name>substrate</name>
    </ligand>
</feature>
<feature type="glycosylation site" description="N-linked (GlcNAc...) asparagine" evidence="3">
    <location>
        <position position="191"/>
    </location>
</feature>
<feature type="disulfide bond" evidence="2">
    <location>
        <begin position="29"/>
        <end position="192"/>
    </location>
</feature>
<feature type="disulfide bond" evidence="2">
    <location>
        <begin position="350"/>
        <end position="431"/>
    </location>
</feature>